<keyword id="KW-0067">ATP-binding</keyword>
<keyword id="KW-0963">Cytoplasm</keyword>
<keyword id="KW-0347">Helicase</keyword>
<keyword id="KW-0378">Hydrolase</keyword>
<keyword id="KW-0547">Nucleotide-binding</keyword>
<keyword id="KW-0694">RNA-binding</keyword>
<protein>
    <recommendedName>
        <fullName evidence="1">ATP-dependent RNA helicase RhlB</fullName>
        <ecNumber evidence="1">3.6.4.13</ecNumber>
    </recommendedName>
</protein>
<sequence>MKKTHITEQKFADLGLEPQVLDGLNAKGFINCTPIQAKALPVLLAGQDIAGQAQTGTGKTLAFLAATFNHLLTTPAPEGRKITQPRAIIMAPTRELAIQIYNDAESLIASTGLKAALAYGGERYEKQQKVIEAGVDILIGTTGRIIDFYKQGQIDFKAIQVVVLDEADRMFDLGFIKDIRFVFRRMPAPAERLNMLFSATLSYRVQELAFEHMQEPEHVVVEPDQKTGHLITEELFYPSNDHKMALLQTLIEEEWPDRAIIFANTKHKCELVWGHLAADKHRVGLLTGDVPQKKRERILEEFTKGEVDILVATDVAARGLHIPQVTHVFNFDLPNEAEDYVHRIGRTGRAGESGNSISFACEEYAINLPAIEEYIEHSIPQSDYDTSALLEDLPAPIRLQRRPPQNRRNGSNNGQRQSGNRKHSRPRPPRSPQA</sequence>
<dbReference type="EC" id="3.6.4.13" evidence="1"/>
<dbReference type="EMBL" id="FM178379">
    <property type="protein sequence ID" value="CAQ77831.1"/>
    <property type="molecule type" value="Genomic_DNA"/>
</dbReference>
<dbReference type="RefSeq" id="WP_012549033.1">
    <property type="nucleotide sequence ID" value="NC_011312.1"/>
</dbReference>
<dbReference type="SMR" id="B6EPA4"/>
<dbReference type="KEGG" id="vsa:VSAL_I0146"/>
<dbReference type="eggNOG" id="COG0513">
    <property type="taxonomic scope" value="Bacteria"/>
</dbReference>
<dbReference type="HOGENOM" id="CLU_003041_1_3_6"/>
<dbReference type="Proteomes" id="UP000001730">
    <property type="component" value="Chromosome 1"/>
</dbReference>
<dbReference type="GO" id="GO:0005829">
    <property type="term" value="C:cytosol"/>
    <property type="evidence" value="ECO:0007669"/>
    <property type="project" value="TreeGrafter"/>
</dbReference>
<dbReference type="GO" id="GO:0005524">
    <property type="term" value="F:ATP binding"/>
    <property type="evidence" value="ECO:0007669"/>
    <property type="project" value="UniProtKB-UniRule"/>
</dbReference>
<dbReference type="GO" id="GO:0016887">
    <property type="term" value="F:ATP hydrolysis activity"/>
    <property type="evidence" value="ECO:0007669"/>
    <property type="project" value="RHEA"/>
</dbReference>
<dbReference type="GO" id="GO:0003723">
    <property type="term" value="F:RNA binding"/>
    <property type="evidence" value="ECO:0007669"/>
    <property type="project" value="UniProtKB-UniRule"/>
</dbReference>
<dbReference type="GO" id="GO:0003724">
    <property type="term" value="F:RNA helicase activity"/>
    <property type="evidence" value="ECO:0007669"/>
    <property type="project" value="UniProtKB-UniRule"/>
</dbReference>
<dbReference type="GO" id="GO:0006401">
    <property type="term" value="P:RNA catabolic process"/>
    <property type="evidence" value="ECO:0007669"/>
    <property type="project" value="UniProtKB-UniRule"/>
</dbReference>
<dbReference type="CDD" id="cd00268">
    <property type="entry name" value="DEADc"/>
    <property type="match status" value="1"/>
</dbReference>
<dbReference type="CDD" id="cd18787">
    <property type="entry name" value="SF2_C_DEAD"/>
    <property type="match status" value="1"/>
</dbReference>
<dbReference type="FunFam" id="3.40.50.300:FF:000312">
    <property type="entry name" value="ATP-dependent RNA helicase RhlB"/>
    <property type="match status" value="1"/>
</dbReference>
<dbReference type="Gene3D" id="3.40.50.300">
    <property type="entry name" value="P-loop containing nucleotide triphosphate hydrolases"/>
    <property type="match status" value="2"/>
</dbReference>
<dbReference type="HAMAP" id="MF_00661">
    <property type="entry name" value="DEAD_helicase_RhlB"/>
    <property type="match status" value="1"/>
</dbReference>
<dbReference type="InterPro" id="IPR011545">
    <property type="entry name" value="DEAD/DEAH_box_helicase_dom"/>
</dbReference>
<dbReference type="InterPro" id="IPR050079">
    <property type="entry name" value="DEAD_box_RNA_helicase"/>
</dbReference>
<dbReference type="InterPro" id="IPR014001">
    <property type="entry name" value="Helicase_ATP-bd"/>
</dbReference>
<dbReference type="InterPro" id="IPR001650">
    <property type="entry name" value="Helicase_C-like"/>
</dbReference>
<dbReference type="InterPro" id="IPR027417">
    <property type="entry name" value="P-loop_NTPase"/>
</dbReference>
<dbReference type="InterPro" id="IPR000629">
    <property type="entry name" value="RNA-helicase_DEAD-box_CS"/>
</dbReference>
<dbReference type="InterPro" id="IPR023554">
    <property type="entry name" value="RNA_helicase_ATP-dep_RhlB"/>
</dbReference>
<dbReference type="InterPro" id="IPR014014">
    <property type="entry name" value="RNA_helicase_DEAD_Q_motif"/>
</dbReference>
<dbReference type="NCBIfam" id="NF003419">
    <property type="entry name" value="PRK04837.1"/>
    <property type="match status" value="1"/>
</dbReference>
<dbReference type="PANTHER" id="PTHR47959:SF10">
    <property type="entry name" value="ATP-DEPENDENT RNA HELICASE RHLB"/>
    <property type="match status" value="1"/>
</dbReference>
<dbReference type="PANTHER" id="PTHR47959">
    <property type="entry name" value="ATP-DEPENDENT RNA HELICASE RHLE-RELATED"/>
    <property type="match status" value="1"/>
</dbReference>
<dbReference type="Pfam" id="PF00270">
    <property type="entry name" value="DEAD"/>
    <property type="match status" value="1"/>
</dbReference>
<dbReference type="Pfam" id="PF00271">
    <property type="entry name" value="Helicase_C"/>
    <property type="match status" value="1"/>
</dbReference>
<dbReference type="SMART" id="SM00487">
    <property type="entry name" value="DEXDc"/>
    <property type="match status" value="1"/>
</dbReference>
<dbReference type="SMART" id="SM00490">
    <property type="entry name" value="HELICc"/>
    <property type="match status" value="1"/>
</dbReference>
<dbReference type="SUPFAM" id="SSF52540">
    <property type="entry name" value="P-loop containing nucleoside triphosphate hydrolases"/>
    <property type="match status" value="1"/>
</dbReference>
<dbReference type="PROSITE" id="PS00039">
    <property type="entry name" value="DEAD_ATP_HELICASE"/>
    <property type="match status" value="1"/>
</dbReference>
<dbReference type="PROSITE" id="PS51192">
    <property type="entry name" value="HELICASE_ATP_BIND_1"/>
    <property type="match status" value="1"/>
</dbReference>
<dbReference type="PROSITE" id="PS51194">
    <property type="entry name" value="HELICASE_CTER"/>
    <property type="match status" value="1"/>
</dbReference>
<dbReference type="PROSITE" id="PS51195">
    <property type="entry name" value="Q_MOTIF"/>
    <property type="match status" value="1"/>
</dbReference>
<gene>
    <name evidence="1" type="primary">rhlB</name>
    <name type="ordered locus">VSAL_I0146</name>
</gene>
<evidence type="ECO:0000255" key="1">
    <source>
        <dbReference type="HAMAP-Rule" id="MF_00661"/>
    </source>
</evidence>
<evidence type="ECO:0000256" key="2">
    <source>
        <dbReference type="SAM" id="MobiDB-lite"/>
    </source>
</evidence>
<organism>
    <name type="scientific">Aliivibrio salmonicida (strain LFI1238)</name>
    <name type="common">Vibrio salmonicida (strain LFI1238)</name>
    <dbReference type="NCBI Taxonomy" id="316275"/>
    <lineage>
        <taxon>Bacteria</taxon>
        <taxon>Pseudomonadati</taxon>
        <taxon>Pseudomonadota</taxon>
        <taxon>Gammaproteobacteria</taxon>
        <taxon>Vibrionales</taxon>
        <taxon>Vibrionaceae</taxon>
        <taxon>Aliivibrio</taxon>
    </lineage>
</organism>
<feature type="chain" id="PRO_1000131285" description="ATP-dependent RNA helicase RhlB">
    <location>
        <begin position="1"/>
        <end position="434"/>
    </location>
</feature>
<feature type="domain" description="Helicase ATP-binding" evidence="1">
    <location>
        <begin position="40"/>
        <end position="219"/>
    </location>
</feature>
<feature type="domain" description="Helicase C-terminal" evidence="1">
    <location>
        <begin position="245"/>
        <end position="390"/>
    </location>
</feature>
<feature type="region of interest" description="Disordered" evidence="2">
    <location>
        <begin position="394"/>
        <end position="434"/>
    </location>
</feature>
<feature type="short sequence motif" description="Q motif">
    <location>
        <begin position="9"/>
        <end position="37"/>
    </location>
</feature>
<feature type="short sequence motif" description="DEAD box">
    <location>
        <begin position="165"/>
        <end position="168"/>
    </location>
</feature>
<feature type="compositionally biased region" description="Low complexity" evidence="2">
    <location>
        <begin position="406"/>
        <end position="418"/>
    </location>
</feature>
<feature type="compositionally biased region" description="Basic residues" evidence="2">
    <location>
        <begin position="419"/>
        <end position="428"/>
    </location>
</feature>
<feature type="binding site" evidence="1">
    <location>
        <begin position="53"/>
        <end position="60"/>
    </location>
    <ligand>
        <name>ATP</name>
        <dbReference type="ChEBI" id="CHEBI:30616"/>
    </ligand>
</feature>
<reference key="1">
    <citation type="journal article" date="2008" name="BMC Genomics">
        <title>The genome sequence of the fish pathogen Aliivibrio salmonicida strain LFI1238 shows extensive evidence of gene decay.</title>
        <authorList>
            <person name="Hjerde E."/>
            <person name="Lorentzen M.S."/>
            <person name="Holden M.T."/>
            <person name="Seeger K."/>
            <person name="Paulsen S."/>
            <person name="Bason N."/>
            <person name="Churcher C."/>
            <person name="Harris D."/>
            <person name="Norbertczak H."/>
            <person name="Quail M.A."/>
            <person name="Sanders S."/>
            <person name="Thurston S."/>
            <person name="Parkhill J."/>
            <person name="Willassen N.P."/>
            <person name="Thomson N.R."/>
        </authorList>
    </citation>
    <scope>NUCLEOTIDE SEQUENCE [LARGE SCALE GENOMIC DNA]</scope>
    <source>
        <strain>LFI1238</strain>
    </source>
</reference>
<name>RHLB_ALISL</name>
<comment type="function">
    <text evidence="1">DEAD-box RNA helicase involved in RNA degradation. Has RNA-dependent ATPase activity and unwinds double-stranded RNA.</text>
</comment>
<comment type="catalytic activity">
    <reaction evidence="1">
        <text>ATP + H2O = ADP + phosphate + H(+)</text>
        <dbReference type="Rhea" id="RHEA:13065"/>
        <dbReference type="ChEBI" id="CHEBI:15377"/>
        <dbReference type="ChEBI" id="CHEBI:15378"/>
        <dbReference type="ChEBI" id="CHEBI:30616"/>
        <dbReference type="ChEBI" id="CHEBI:43474"/>
        <dbReference type="ChEBI" id="CHEBI:456216"/>
        <dbReference type="EC" id="3.6.4.13"/>
    </reaction>
</comment>
<comment type="subunit">
    <text evidence="1">Component of the RNA degradosome, which is a multiprotein complex involved in RNA processing and mRNA degradation.</text>
</comment>
<comment type="subcellular location">
    <subcellularLocation>
        <location evidence="1">Cytoplasm</location>
    </subcellularLocation>
</comment>
<comment type="similarity">
    <text evidence="1">Belongs to the DEAD box helicase family. RhlB subfamily.</text>
</comment>
<accession>B6EPA4</accession>
<proteinExistence type="inferred from homology"/>